<dbReference type="EMBL" id="BA000036">
    <property type="status" value="NOT_ANNOTATED_CDS"/>
    <property type="molecule type" value="Genomic_DNA"/>
</dbReference>
<dbReference type="EMBL" id="BX927157">
    <property type="protein sequence ID" value="CAF19037.1"/>
    <property type="molecule type" value="Genomic_DNA"/>
</dbReference>
<dbReference type="STRING" id="196627.cg3430"/>
<dbReference type="KEGG" id="cgb:cg3430"/>
<dbReference type="eggNOG" id="COG0759">
    <property type="taxonomic scope" value="Bacteria"/>
</dbReference>
<dbReference type="Proteomes" id="UP000000582">
    <property type="component" value="Chromosome"/>
</dbReference>
<dbReference type="Proteomes" id="UP000001009">
    <property type="component" value="Chromosome"/>
</dbReference>
<dbReference type="GO" id="GO:0005886">
    <property type="term" value="C:plasma membrane"/>
    <property type="evidence" value="ECO:0007669"/>
    <property type="project" value="UniProtKB-SubCell"/>
</dbReference>
<dbReference type="HAMAP" id="MF_00386">
    <property type="entry name" value="UPF0161_YidD"/>
    <property type="match status" value="1"/>
</dbReference>
<dbReference type="InterPro" id="IPR002696">
    <property type="entry name" value="Membr_insert_effic_factor_YidD"/>
</dbReference>
<dbReference type="NCBIfam" id="TIGR00278">
    <property type="entry name" value="membrane protein insertion efficiency factor YidD"/>
    <property type="match status" value="1"/>
</dbReference>
<dbReference type="PANTHER" id="PTHR33383">
    <property type="entry name" value="MEMBRANE PROTEIN INSERTION EFFICIENCY FACTOR-RELATED"/>
    <property type="match status" value="1"/>
</dbReference>
<dbReference type="PANTHER" id="PTHR33383:SF1">
    <property type="entry name" value="MEMBRANE PROTEIN INSERTION EFFICIENCY FACTOR-RELATED"/>
    <property type="match status" value="1"/>
</dbReference>
<dbReference type="Pfam" id="PF01809">
    <property type="entry name" value="YidD"/>
    <property type="match status" value="1"/>
</dbReference>
<dbReference type="SMART" id="SM01234">
    <property type="entry name" value="Haemolytic"/>
    <property type="match status" value="1"/>
</dbReference>
<comment type="function">
    <text evidence="1">Could be involved in insertion of integral membrane proteins into the membrane.</text>
</comment>
<comment type="subcellular location">
    <subcellularLocation>
        <location evidence="1">Cell membrane</location>
        <topology evidence="1">Peripheral membrane protein</topology>
        <orientation evidence="1">Cytoplasmic side</orientation>
    </subcellularLocation>
</comment>
<comment type="similarity">
    <text evidence="1">Belongs to the UPF0161 family.</text>
</comment>
<organism>
    <name type="scientific">Corynebacterium glutamicum (strain ATCC 13032 / DSM 20300 / JCM 1318 / BCRC 11384 / CCUG 27702 / LMG 3730 / NBRC 12168 / NCIMB 10025 / NRRL B-2784 / 534)</name>
    <dbReference type="NCBI Taxonomy" id="196627"/>
    <lineage>
        <taxon>Bacteria</taxon>
        <taxon>Bacillati</taxon>
        <taxon>Actinomycetota</taxon>
        <taxon>Actinomycetes</taxon>
        <taxon>Mycobacteriales</taxon>
        <taxon>Corynebacteriaceae</taxon>
        <taxon>Corynebacterium</taxon>
    </lineage>
</organism>
<reference key="1">
    <citation type="journal article" date="2003" name="Appl. Microbiol. Biotechnol.">
        <title>The Corynebacterium glutamicum genome: features and impacts on biotechnological processes.</title>
        <authorList>
            <person name="Ikeda M."/>
            <person name="Nakagawa S."/>
        </authorList>
    </citation>
    <scope>NUCLEOTIDE SEQUENCE [LARGE SCALE GENOMIC DNA]</scope>
    <source>
        <strain>ATCC 13032 / DSM 20300 / JCM 1318 / BCRC 11384 / CCUG 27702 / LMG 3730 / NBRC 12168 / NCIMB 10025 / NRRL B-2784 / 534</strain>
    </source>
</reference>
<reference key="2">
    <citation type="journal article" date="2003" name="J. Biotechnol.">
        <title>The complete Corynebacterium glutamicum ATCC 13032 genome sequence and its impact on the production of L-aspartate-derived amino acids and vitamins.</title>
        <authorList>
            <person name="Kalinowski J."/>
            <person name="Bathe B."/>
            <person name="Bartels D."/>
            <person name="Bischoff N."/>
            <person name="Bott M."/>
            <person name="Burkovski A."/>
            <person name="Dusch N."/>
            <person name="Eggeling L."/>
            <person name="Eikmanns B.J."/>
            <person name="Gaigalat L."/>
            <person name="Goesmann A."/>
            <person name="Hartmann M."/>
            <person name="Huthmacher K."/>
            <person name="Kraemer R."/>
            <person name="Linke B."/>
            <person name="McHardy A.C."/>
            <person name="Meyer F."/>
            <person name="Moeckel B."/>
            <person name="Pfefferle W."/>
            <person name="Puehler A."/>
            <person name="Rey D.A."/>
            <person name="Rueckert C."/>
            <person name="Rupp O."/>
            <person name="Sahm H."/>
            <person name="Wendisch V.F."/>
            <person name="Wiegraebe I."/>
            <person name="Tauch A."/>
        </authorList>
    </citation>
    <scope>NUCLEOTIDE SEQUENCE [LARGE SCALE GENOMIC DNA]</scope>
    <source>
        <strain>ATCC 13032 / DSM 20300 / JCM 1318 / BCRC 11384 / CCUG 27702 / LMG 3730 / NBRC 12168 / NCIMB 10025 / NRRL B-2784 / 534</strain>
    </source>
</reference>
<name>YIDD_CORGL</name>
<proteinExistence type="inferred from homology"/>
<protein>
    <recommendedName>
        <fullName evidence="1">Putative membrane protein insertion efficiency factor</fullName>
    </recommendedName>
</protein>
<gene>
    <name type="ordered locus">Cgl3097.1</name>
    <name type="ordered locus">cg3430</name>
</gene>
<sequence>MCAPTSDDPFDIPEPKSIPAKTAASAVRFYQKYLSGLKMGSTCRFDPVCSTYALKAVSVHGAFKGTILSAARLSKCGPWHPGGFDPVPNHGFWSTETVT</sequence>
<evidence type="ECO:0000255" key="1">
    <source>
        <dbReference type="HAMAP-Rule" id="MF_00386"/>
    </source>
</evidence>
<feature type="chain" id="PRO_0000171817" description="Putative membrane protein insertion efficiency factor">
    <location>
        <begin position="1"/>
        <end position="99"/>
    </location>
</feature>
<accession>P61465</accession>
<keyword id="KW-1003">Cell membrane</keyword>
<keyword id="KW-0472">Membrane</keyword>
<keyword id="KW-1185">Reference proteome</keyword>